<organism>
    <name type="scientific">Shewanella loihica (strain ATCC BAA-1088 / PV-4)</name>
    <dbReference type="NCBI Taxonomy" id="323850"/>
    <lineage>
        <taxon>Bacteria</taxon>
        <taxon>Pseudomonadati</taxon>
        <taxon>Pseudomonadota</taxon>
        <taxon>Gammaproteobacteria</taxon>
        <taxon>Alteromonadales</taxon>
        <taxon>Shewanellaceae</taxon>
        <taxon>Shewanella</taxon>
    </lineage>
</organism>
<evidence type="ECO:0000255" key="1">
    <source>
        <dbReference type="HAMAP-Rule" id="MF_00711"/>
    </source>
</evidence>
<dbReference type="EC" id="1.4.4.2" evidence="1"/>
<dbReference type="EMBL" id="CP000606">
    <property type="protein sequence ID" value="ABO24928.1"/>
    <property type="molecule type" value="Genomic_DNA"/>
</dbReference>
<dbReference type="RefSeq" id="WP_011866858.1">
    <property type="nucleotide sequence ID" value="NC_009092.1"/>
</dbReference>
<dbReference type="SMR" id="A3QHI0"/>
<dbReference type="STRING" id="323850.Shew_3062"/>
<dbReference type="KEGG" id="slo:Shew_3062"/>
<dbReference type="eggNOG" id="COG0403">
    <property type="taxonomic scope" value="Bacteria"/>
</dbReference>
<dbReference type="eggNOG" id="COG1003">
    <property type="taxonomic scope" value="Bacteria"/>
</dbReference>
<dbReference type="HOGENOM" id="CLU_004620_1_1_6"/>
<dbReference type="OrthoDB" id="9801272at2"/>
<dbReference type="Proteomes" id="UP000001558">
    <property type="component" value="Chromosome"/>
</dbReference>
<dbReference type="GO" id="GO:0005829">
    <property type="term" value="C:cytosol"/>
    <property type="evidence" value="ECO:0007669"/>
    <property type="project" value="TreeGrafter"/>
</dbReference>
<dbReference type="GO" id="GO:0005960">
    <property type="term" value="C:glycine cleavage complex"/>
    <property type="evidence" value="ECO:0007669"/>
    <property type="project" value="TreeGrafter"/>
</dbReference>
<dbReference type="GO" id="GO:0016594">
    <property type="term" value="F:glycine binding"/>
    <property type="evidence" value="ECO:0007669"/>
    <property type="project" value="TreeGrafter"/>
</dbReference>
<dbReference type="GO" id="GO:0004375">
    <property type="term" value="F:glycine dehydrogenase (decarboxylating) activity"/>
    <property type="evidence" value="ECO:0007669"/>
    <property type="project" value="UniProtKB-EC"/>
</dbReference>
<dbReference type="GO" id="GO:0030170">
    <property type="term" value="F:pyridoxal phosphate binding"/>
    <property type="evidence" value="ECO:0007669"/>
    <property type="project" value="TreeGrafter"/>
</dbReference>
<dbReference type="GO" id="GO:0019464">
    <property type="term" value="P:glycine decarboxylation via glycine cleavage system"/>
    <property type="evidence" value="ECO:0007669"/>
    <property type="project" value="UniProtKB-UniRule"/>
</dbReference>
<dbReference type="CDD" id="cd00613">
    <property type="entry name" value="GDC-P"/>
    <property type="match status" value="2"/>
</dbReference>
<dbReference type="FunFam" id="3.40.640.10:FF:000005">
    <property type="entry name" value="Glycine dehydrogenase (decarboxylating), mitochondrial"/>
    <property type="match status" value="1"/>
</dbReference>
<dbReference type="FunFam" id="3.90.1150.10:FF:000007">
    <property type="entry name" value="Glycine dehydrogenase (decarboxylating), mitochondrial"/>
    <property type="match status" value="1"/>
</dbReference>
<dbReference type="FunFam" id="3.40.640.10:FF:000007">
    <property type="entry name" value="glycine dehydrogenase (Decarboxylating), mitochondrial"/>
    <property type="match status" value="1"/>
</dbReference>
<dbReference type="Gene3D" id="3.90.1150.10">
    <property type="entry name" value="Aspartate Aminotransferase, domain 1"/>
    <property type="match status" value="2"/>
</dbReference>
<dbReference type="Gene3D" id="3.40.640.10">
    <property type="entry name" value="Type I PLP-dependent aspartate aminotransferase-like (Major domain)"/>
    <property type="match status" value="2"/>
</dbReference>
<dbReference type="HAMAP" id="MF_00711">
    <property type="entry name" value="GcvP"/>
    <property type="match status" value="1"/>
</dbReference>
<dbReference type="InterPro" id="IPR003437">
    <property type="entry name" value="GcvP"/>
</dbReference>
<dbReference type="InterPro" id="IPR049316">
    <property type="entry name" value="GDC-P_C"/>
</dbReference>
<dbReference type="InterPro" id="IPR049315">
    <property type="entry name" value="GDC-P_N"/>
</dbReference>
<dbReference type="InterPro" id="IPR020581">
    <property type="entry name" value="GDC_P"/>
</dbReference>
<dbReference type="InterPro" id="IPR015424">
    <property type="entry name" value="PyrdxlP-dep_Trfase"/>
</dbReference>
<dbReference type="InterPro" id="IPR015421">
    <property type="entry name" value="PyrdxlP-dep_Trfase_major"/>
</dbReference>
<dbReference type="InterPro" id="IPR015422">
    <property type="entry name" value="PyrdxlP-dep_Trfase_small"/>
</dbReference>
<dbReference type="NCBIfam" id="TIGR00461">
    <property type="entry name" value="gcvP"/>
    <property type="match status" value="1"/>
</dbReference>
<dbReference type="NCBIfam" id="NF003346">
    <property type="entry name" value="PRK04366.1"/>
    <property type="match status" value="1"/>
</dbReference>
<dbReference type="PANTHER" id="PTHR11773:SF13">
    <property type="entry name" value="GLYCINE DEHYDROGENASE (DECARBOXYLATING)"/>
    <property type="match status" value="1"/>
</dbReference>
<dbReference type="PANTHER" id="PTHR11773">
    <property type="entry name" value="GLYCINE DEHYDROGENASE, DECARBOXYLATING"/>
    <property type="match status" value="1"/>
</dbReference>
<dbReference type="Pfam" id="PF21478">
    <property type="entry name" value="GcvP2_C"/>
    <property type="match status" value="1"/>
</dbReference>
<dbReference type="Pfam" id="PF02347">
    <property type="entry name" value="GDC-P"/>
    <property type="match status" value="2"/>
</dbReference>
<dbReference type="SUPFAM" id="SSF53383">
    <property type="entry name" value="PLP-dependent transferases"/>
    <property type="match status" value="2"/>
</dbReference>
<reference key="1">
    <citation type="submission" date="2007-03" db="EMBL/GenBank/DDBJ databases">
        <title>Complete sequence of Shewanella loihica PV-4.</title>
        <authorList>
            <consortium name="US DOE Joint Genome Institute"/>
            <person name="Copeland A."/>
            <person name="Lucas S."/>
            <person name="Lapidus A."/>
            <person name="Barry K."/>
            <person name="Detter J.C."/>
            <person name="Glavina del Rio T."/>
            <person name="Hammon N."/>
            <person name="Israni S."/>
            <person name="Dalin E."/>
            <person name="Tice H."/>
            <person name="Pitluck S."/>
            <person name="Chain P."/>
            <person name="Malfatti S."/>
            <person name="Shin M."/>
            <person name="Vergez L."/>
            <person name="Schmutz J."/>
            <person name="Larimer F."/>
            <person name="Land M."/>
            <person name="Hauser L."/>
            <person name="Kyrpides N."/>
            <person name="Mikhailova N."/>
            <person name="Romine M.F."/>
            <person name="Serres G."/>
            <person name="Fredrickson J."/>
            <person name="Tiedje J."/>
            <person name="Richardson P."/>
        </authorList>
    </citation>
    <scope>NUCLEOTIDE SEQUENCE [LARGE SCALE GENOMIC DNA]</scope>
    <source>
        <strain>ATCC BAA-1088 / PV-4</strain>
    </source>
</reference>
<protein>
    <recommendedName>
        <fullName evidence="1">Glycine dehydrogenase (decarboxylating)</fullName>
        <ecNumber evidence="1">1.4.4.2</ecNumber>
    </recommendedName>
    <alternativeName>
        <fullName evidence="1">Glycine cleavage system P-protein</fullName>
    </alternativeName>
    <alternativeName>
        <fullName evidence="1">Glycine decarboxylase</fullName>
    </alternativeName>
    <alternativeName>
        <fullName evidence="1">Glycine dehydrogenase (aminomethyl-transferring)</fullName>
    </alternativeName>
</protein>
<name>GCSP_SHELP</name>
<proteinExistence type="inferred from homology"/>
<comment type="function">
    <text evidence="1">The glycine cleavage system catalyzes the degradation of glycine. The P protein binds the alpha-amino group of glycine through its pyridoxal phosphate cofactor; CO(2) is released and the remaining methylamine moiety is then transferred to the lipoamide cofactor of the H protein.</text>
</comment>
<comment type="catalytic activity">
    <reaction evidence="1">
        <text>N(6)-[(R)-lipoyl]-L-lysyl-[glycine-cleavage complex H protein] + glycine + H(+) = N(6)-[(R)-S(8)-aminomethyldihydrolipoyl]-L-lysyl-[glycine-cleavage complex H protein] + CO2</text>
        <dbReference type="Rhea" id="RHEA:24304"/>
        <dbReference type="Rhea" id="RHEA-COMP:10494"/>
        <dbReference type="Rhea" id="RHEA-COMP:10495"/>
        <dbReference type="ChEBI" id="CHEBI:15378"/>
        <dbReference type="ChEBI" id="CHEBI:16526"/>
        <dbReference type="ChEBI" id="CHEBI:57305"/>
        <dbReference type="ChEBI" id="CHEBI:83099"/>
        <dbReference type="ChEBI" id="CHEBI:83143"/>
        <dbReference type="EC" id="1.4.4.2"/>
    </reaction>
</comment>
<comment type="cofactor">
    <cofactor evidence="1">
        <name>pyridoxal 5'-phosphate</name>
        <dbReference type="ChEBI" id="CHEBI:597326"/>
    </cofactor>
</comment>
<comment type="subunit">
    <text evidence="1">The glycine cleavage system is composed of four proteins: P, T, L and H.</text>
</comment>
<comment type="similarity">
    <text evidence="1">Belongs to the GcvP family.</text>
</comment>
<gene>
    <name evidence="1" type="primary">gcvP</name>
    <name type="ordered locus">Shew_3062</name>
</gene>
<feature type="chain" id="PRO_1000045610" description="Glycine dehydrogenase (decarboxylating)">
    <location>
        <begin position="1"/>
        <end position="962"/>
    </location>
</feature>
<feature type="modified residue" description="N6-(pyridoxal phosphate)lysine" evidence="1">
    <location>
        <position position="709"/>
    </location>
</feature>
<keyword id="KW-0560">Oxidoreductase</keyword>
<keyword id="KW-0663">Pyridoxal phosphate</keyword>
<keyword id="KW-1185">Reference proteome</keyword>
<sequence>MTTETLTQLEQHELFIRRHIGPDSADQQEMLNFVGAESLEDLTQQIVPESIRLGRDLAVGSACGEAEGLASIRKYADKNKVFKSYIGMGYYGTIVPSVIQRNVFENPGWYTAYTPYQPEIAQGRLEAILNFQQLSMDLTGLDLASASLLDEATAAAEAMALAKRVSKAKKANIFFIADDVFPQTIDVVKTRAECFGFEIVVGPASEAVNYELFGALFQYTNHYGQITDFTELFAALQEKKAVVTVAADIMSLVSLKSPGSMGADVVFGSAQRFGVPMGFGGPHAAFFVTRDQHKRSLPGRIIGVSQDTRGNRALRMAMQTREQHIRREKANSNICTAQVLLANMASFYAVFHGPQGLKIIADRIHRLADIFAAGLKAKGVELVNNTWFDTVSFKVADSAAAQARAIAGEVNLRIDSDGILGVAMAETTTREDVAQLFDIVLGEGHGLDVAAIDADIIANGSNSIPAELVRQDAILEHPTFNRYHSETEMMRYIKRLENKDLALNHSMISLGSCTMKLNAATEMMPVSWPEFGNMHPFCPQDQAQGYAELIEELSNWLVDITGYDAMCMQPNSGASGEYAGLLAIKKYHESRGEGHRNVCLIPQSAHGTNPASAQLAGMKIVVTACDKQGNVDMEDLKAKAAEVAENLSCIMVTYPSTHGVYEETISEICEVIHQHGGQVYLDGANMNAQVGLTSPGSIGADVSHLNLHKTFAIPHGGGGPGMGPIGVKAHLAPFVAGHAVVKHGRESDNNGAVSAAPYGSASILPITWMYIKLLGYQGLRQSTQMALLNANYVMKKLSAHYPVLYTGRNDRVAHECIIDLRPLKEASGVTEMDIAKRLNDYGFHAPTMSFPVAGTLMIEPTESESKAELDRFIEAMVAIRGEIAKVEAGEWPADNNPLHNAPHTMADIMDSEFDSRPYSRETAVFPTAAVKANKFWPTVNRIDDVYGDRNLMCSCAPIDDYK</sequence>
<accession>A3QHI0</accession>